<evidence type="ECO:0000255" key="1">
    <source>
        <dbReference type="HAMAP-Rule" id="MF_01864"/>
    </source>
</evidence>
<evidence type="ECO:0000255" key="2">
    <source>
        <dbReference type="PROSITE-ProRule" id="PRU01266"/>
    </source>
</evidence>
<keyword id="KW-0004">4Fe-4S</keyword>
<keyword id="KW-0963">Cytoplasm</keyword>
<keyword id="KW-0408">Iron</keyword>
<keyword id="KW-0411">Iron-sulfur</keyword>
<keyword id="KW-0479">Metal-binding</keyword>
<keyword id="KW-1185">Reference proteome</keyword>
<keyword id="KW-0949">S-adenosyl-L-methionine</keyword>
<keyword id="KW-0808">Transferase</keyword>
<keyword id="KW-0819">tRNA processing</keyword>
<reference key="1">
    <citation type="submission" date="2007-05" db="EMBL/GenBank/DDBJ databases">
        <title>Complete sequence of chromosome of Acidiphilium cryptum JF-5.</title>
        <authorList>
            <consortium name="US DOE Joint Genome Institute"/>
            <person name="Copeland A."/>
            <person name="Lucas S."/>
            <person name="Lapidus A."/>
            <person name="Barry K."/>
            <person name="Detter J.C."/>
            <person name="Glavina del Rio T."/>
            <person name="Hammon N."/>
            <person name="Israni S."/>
            <person name="Dalin E."/>
            <person name="Tice H."/>
            <person name="Pitluck S."/>
            <person name="Sims D."/>
            <person name="Brettin T."/>
            <person name="Bruce D."/>
            <person name="Han C."/>
            <person name="Schmutz J."/>
            <person name="Larimer F."/>
            <person name="Land M."/>
            <person name="Hauser L."/>
            <person name="Kyrpides N."/>
            <person name="Kim E."/>
            <person name="Magnuson T."/>
            <person name="Richardson P."/>
        </authorList>
    </citation>
    <scope>NUCLEOTIDE SEQUENCE [LARGE SCALE GENOMIC DNA]</scope>
    <source>
        <strain>JF-5</strain>
    </source>
</reference>
<proteinExistence type="inferred from homology"/>
<feature type="chain" id="PRO_0000374080" description="tRNA-2-methylthio-N(6)-dimethylallyladenosine synthase">
    <location>
        <begin position="1"/>
        <end position="450"/>
    </location>
</feature>
<feature type="domain" description="MTTase N-terminal" evidence="1">
    <location>
        <begin position="8"/>
        <end position="124"/>
    </location>
</feature>
<feature type="domain" description="Radical SAM core" evidence="2">
    <location>
        <begin position="148"/>
        <end position="380"/>
    </location>
</feature>
<feature type="domain" description="TRAM" evidence="1">
    <location>
        <begin position="383"/>
        <end position="445"/>
    </location>
</feature>
<feature type="binding site" evidence="1">
    <location>
        <position position="17"/>
    </location>
    <ligand>
        <name>[4Fe-4S] cluster</name>
        <dbReference type="ChEBI" id="CHEBI:49883"/>
        <label>1</label>
    </ligand>
</feature>
<feature type="binding site" evidence="1">
    <location>
        <position position="52"/>
    </location>
    <ligand>
        <name>[4Fe-4S] cluster</name>
        <dbReference type="ChEBI" id="CHEBI:49883"/>
        <label>1</label>
    </ligand>
</feature>
<feature type="binding site" evidence="1">
    <location>
        <position position="87"/>
    </location>
    <ligand>
        <name>[4Fe-4S] cluster</name>
        <dbReference type="ChEBI" id="CHEBI:49883"/>
        <label>1</label>
    </ligand>
</feature>
<feature type="binding site" evidence="1">
    <location>
        <position position="162"/>
    </location>
    <ligand>
        <name>[4Fe-4S] cluster</name>
        <dbReference type="ChEBI" id="CHEBI:49883"/>
        <label>2</label>
        <note>4Fe-4S-S-AdoMet</note>
    </ligand>
</feature>
<feature type="binding site" evidence="1">
    <location>
        <position position="166"/>
    </location>
    <ligand>
        <name>[4Fe-4S] cluster</name>
        <dbReference type="ChEBI" id="CHEBI:49883"/>
        <label>2</label>
        <note>4Fe-4S-S-AdoMet</note>
    </ligand>
</feature>
<feature type="binding site" evidence="1">
    <location>
        <position position="169"/>
    </location>
    <ligand>
        <name>[4Fe-4S] cluster</name>
        <dbReference type="ChEBI" id="CHEBI:49883"/>
        <label>2</label>
        <note>4Fe-4S-S-AdoMet</note>
    </ligand>
</feature>
<protein>
    <recommendedName>
        <fullName evidence="1">tRNA-2-methylthio-N(6)-dimethylallyladenosine synthase</fullName>
        <ecNumber evidence="1">2.8.4.3</ecNumber>
    </recommendedName>
    <alternativeName>
        <fullName evidence="1">(Dimethylallyl)adenosine tRNA methylthiotransferase MiaB</fullName>
    </alternativeName>
    <alternativeName>
        <fullName evidence="1">tRNA-i(6)A37 methylthiotransferase</fullName>
    </alternativeName>
</protein>
<sequence>MTETASRRTLHITTWGCQMNVYDSGRMADVLRPLGYRQVATQDADMVILNTCHIRERASEKLFSELGRLRALKESRGGAMMIAVAGCVAQAEGAEILARAPHVDLVVGSQAYHRLPELIAEIEAKRRAVIDTDFPAAQKFDLLPEDQASQGPIAFLAIQEGCDKFCTFCVVPYTRGAEASRPAAAILAEARRLVAGGAREIALLGQNVNAWHGEAPDGATWNLARLLAELADIDGLARLRYTTSHPRDMDAALIAAHRDNPKLMPFLHLPVQSGSDAILARMNRRHGADLFRRIAGELRAARPDIALSSDFIVGFPGETDADFAATMRLVRETGFALAYSFKYSRRPGTPAADAADQIDEAVKDARLQELQAVLRDQQHAFNRAQVGRSFEVLFTGPGRHPGQSAGRSPYLQPVVVDNADIPPGTLRTVKIVQSNPNSLMASLTQEQIAA</sequence>
<dbReference type="EC" id="2.8.4.3" evidence="1"/>
<dbReference type="EMBL" id="CP000697">
    <property type="protein sequence ID" value="ABQ30564.1"/>
    <property type="molecule type" value="Genomic_DNA"/>
</dbReference>
<dbReference type="RefSeq" id="WP_007423477.1">
    <property type="nucleotide sequence ID" value="NC_009484.1"/>
</dbReference>
<dbReference type="SMR" id="A5FY82"/>
<dbReference type="STRING" id="349163.Acry_1353"/>
<dbReference type="KEGG" id="acr:Acry_1353"/>
<dbReference type="eggNOG" id="COG0621">
    <property type="taxonomic scope" value="Bacteria"/>
</dbReference>
<dbReference type="HOGENOM" id="CLU_018697_2_0_5"/>
<dbReference type="Proteomes" id="UP000000245">
    <property type="component" value="Chromosome"/>
</dbReference>
<dbReference type="GO" id="GO:0005829">
    <property type="term" value="C:cytosol"/>
    <property type="evidence" value="ECO:0007669"/>
    <property type="project" value="TreeGrafter"/>
</dbReference>
<dbReference type="GO" id="GO:0051539">
    <property type="term" value="F:4 iron, 4 sulfur cluster binding"/>
    <property type="evidence" value="ECO:0007669"/>
    <property type="project" value="UniProtKB-UniRule"/>
</dbReference>
<dbReference type="GO" id="GO:0046872">
    <property type="term" value="F:metal ion binding"/>
    <property type="evidence" value="ECO:0007669"/>
    <property type="project" value="UniProtKB-KW"/>
</dbReference>
<dbReference type="GO" id="GO:0035597">
    <property type="term" value="F:N6-isopentenyladenosine methylthiotransferase activity"/>
    <property type="evidence" value="ECO:0007669"/>
    <property type="project" value="TreeGrafter"/>
</dbReference>
<dbReference type="CDD" id="cd01335">
    <property type="entry name" value="Radical_SAM"/>
    <property type="match status" value="1"/>
</dbReference>
<dbReference type="FunFam" id="3.40.50.12160:FF:000003">
    <property type="entry name" value="CDK5 regulatory subunit-associated protein 1"/>
    <property type="match status" value="1"/>
</dbReference>
<dbReference type="FunFam" id="3.80.30.20:FF:000001">
    <property type="entry name" value="tRNA-2-methylthio-N(6)-dimethylallyladenosine synthase 2"/>
    <property type="match status" value="1"/>
</dbReference>
<dbReference type="Gene3D" id="3.40.50.12160">
    <property type="entry name" value="Methylthiotransferase, N-terminal domain"/>
    <property type="match status" value="1"/>
</dbReference>
<dbReference type="Gene3D" id="3.80.30.20">
    <property type="entry name" value="tm_1862 like domain"/>
    <property type="match status" value="1"/>
</dbReference>
<dbReference type="HAMAP" id="MF_01864">
    <property type="entry name" value="tRNA_metthiotr_MiaB"/>
    <property type="match status" value="1"/>
</dbReference>
<dbReference type="InterPro" id="IPR006638">
    <property type="entry name" value="Elp3/MiaA/NifB-like_rSAM"/>
</dbReference>
<dbReference type="InterPro" id="IPR005839">
    <property type="entry name" value="Methylthiotransferase"/>
</dbReference>
<dbReference type="InterPro" id="IPR020612">
    <property type="entry name" value="Methylthiotransferase_CS"/>
</dbReference>
<dbReference type="InterPro" id="IPR013848">
    <property type="entry name" value="Methylthiotransferase_N"/>
</dbReference>
<dbReference type="InterPro" id="IPR038135">
    <property type="entry name" value="Methylthiotransferase_N_sf"/>
</dbReference>
<dbReference type="InterPro" id="IPR006463">
    <property type="entry name" value="MiaB_methiolase"/>
</dbReference>
<dbReference type="InterPro" id="IPR007197">
    <property type="entry name" value="rSAM"/>
</dbReference>
<dbReference type="InterPro" id="IPR023404">
    <property type="entry name" value="rSAM_horseshoe"/>
</dbReference>
<dbReference type="InterPro" id="IPR002792">
    <property type="entry name" value="TRAM_dom"/>
</dbReference>
<dbReference type="NCBIfam" id="TIGR01574">
    <property type="entry name" value="miaB-methiolase"/>
    <property type="match status" value="1"/>
</dbReference>
<dbReference type="NCBIfam" id="TIGR00089">
    <property type="entry name" value="MiaB/RimO family radical SAM methylthiotransferase"/>
    <property type="match status" value="1"/>
</dbReference>
<dbReference type="PANTHER" id="PTHR43020">
    <property type="entry name" value="CDK5 REGULATORY SUBUNIT-ASSOCIATED PROTEIN 1"/>
    <property type="match status" value="1"/>
</dbReference>
<dbReference type="PANTHER" id="PTHR43020:SF2">
    <property type="entry name" value="MITOCHONDRIAL TRNA METHYLTHIOTRANSFERASE CDK5RAP1"/>
    <property type="match status" value="1"/>
</dbReference>
<dbReference type="Pfam" id="PF04055">
    <property type="entry name" value="Radical_SAM"/>
    <property type="match status" value="1"/>
</dbReference>
<dbReference type="Pfam" id="PF01938">
    <property type="entry name" value="TRAM"/>
    <property type="match status" value="1"/>
</dbReference>
<dbReference type="Pfam" id="PF00919">
    <property type="entry name" value="UPF0004"/>
    <property type="match status" value="1"/>
</dbReference>
<dbReference type="SFLD" id="SFLDF00273">
    <property type="entry name" value="(dimethylallyl)adenosine_tRNA"/>
    <property type="match status" value="1"/>
</dbReference>
<dbReference type="SFLD" id="SFLDG01082">
    <property type="entry name" value="B12-binding_domain_containing"/>
    <property type="match status" value="1"/>
</dbReference>
<dbReference type="SFLD" id="SFLDS00029">
    <property type="entry name" value="Radical_SAM"/>
    <property type="match status" value="1"/>
</dbReference>
<dbReference type="SMART" id="SM00729">
    <property type="entry name" value="Elp3"/>
    <property type="match status" value="1"/>
</dbReference>
<dbReference type="SUPFAM" id="SSF102114">
    <property type="entry name" value="Radical SAM enzymes"/>
    <property type="match status" value="1"/>
</dbReference>
<dbReference type="PROSITE" id="PS51449">
    <property type="entry name" value="MTTASE_N"/>
    <property type="match status" value="1"/>
</dbReference>
<dbReference type="PROSITE" id="PS01278">
    <property type="entry name" value="MTTASE_RADICAL"/>
    <property type="match status" value="1"/>
</dbReference>
<dbReference type="PROSITE" id="PS51918">
    <property type="entry name" value="RADICAL_SAM"/>
    <property type="match status" value="1"/>
</dbReference>
<dbReference type="PROSITE" id="PS50926">
    <property type="entry name" value="TRAM"/>
    <property type="match status" value="1"/>
</dbReference>
<accession>A5FY82</accession>
<name>MIAB_ACICJ</name>
<gene>
    <name evidence="1" type="primary">miaB</name>
    <name type="ordered locus">Acry_1353</name>
</gene>
<comment type="function">
    <text evidence="1">Catalyzes the methylthiolation of N6-(dimethylallyl)adenosine (i(6)A), leading to the formation of 2-methylthio-N6-(dimethylallyl)adenosine (ms(2)i(6)A) at position 37 in tRNAs that read codons beginning with uridine.</text>
</comment>
<comment type="catalytic activity">
    <reaction evidence="1">
        <text>N(6)-dimethylallyladenosine(37) in tRNA + (sulfur carrier)-SH + AH2 + 2 S-adenosyl-L-methionine = 2-methylsulfanyl-N(6)-dimethylallyladenosine(37) in tRNA + (sulfur carrier)-H + 5'-deoxyadenosine + L-methionine + A + S-adenosyl-L-homocysteine + 2 H(+)</text>
        <dbReference type="Rhea" id="RHEA:37067"/>
        <dbReference type="Rhea" id="RHEA-COMP:10375"/>
        <dbReference type="Rhea" id="RHEA-COMP:10376"/>
        <dbReference type="Rhea" id="RHEA-COMP:14737"/>
        <dbReference type="Rhea" id="RHEA-COMP:14739"/>
        <dbReference type="ChEBI" id="CHEBI:13193"/>
        <dbReference type="ChEBI" id="CHEBI:15378"/>
        <dbReference type="ChEBI" id="CHEBI:17319"/>
        <dbReference type="ChEBI" id="CHEBI:17499"/>
        <dbReference type="ChEBI" id="CHEBI:29917"/>
        <dbReference type="ChEBI" id="CHEBI:57844"/>
        <dbReference type="ChEBI" id="CHEBI:57856"/>
        <dbReference type="ChEBI" id="CHEBI:59789"/>
        <dbReference type="ChEBI" id="CHEBI:64428"/>
        <dbReference type="ChEBI" id="CHEBI:74415"/>
        <dbReference type="ChEBI" id="CHEBI:74417"/>
        <dbReference type="EC" id="2.8.4.3"/>
    </reaction>
</comment>
<comment type="cofactor">
    <cofactor evidence="1">
        <name>[4Fe-4S] cluster</name>
        <dbReference type="ChEBI" id="CHEBI:49883"/>
    </cofactor>
    <text evidence="1">Binds 2 [4Fe-4S] clusters. One cluster is coordinated with 3 cysteines and an exchangeable S-adenosyl-L-methionine.</text>
</comment>
<comment type="subunit">
    <text evidence="1">Monomer.</text>
</comment>
<comment type="subcellular location">
    <subcellularLocation>
        <location evidence="1">Cytoplasm</location>
    </subcellularLocation>
</comment>
<comment type="similarity">
    <text evidence="1">Belongs to the methylthiotransferase family. MiaB subfamily.</text>
</comment>
<organism>
    <name type="scientific">Acidiphilium cryptum (strain JF-5)</name>
    <dbReference type="NCBI Taxonomy" id="349163"/>
    <lineage>
        <taxon>Bacteria</taxon>
        <taxon>Pseudomonadati</taxon>
        <taxon>Pseudomonadota</taxon>
        <taxon>Alphaproteobacteria</taxon>
        <taxon>Acetobacterales</taxon>
        <taxon>Acidocellaceae</taxon>
        <taxon>Acidiphilium</taxon>
    </lineage>
</organism>